<sequence>MIDIQLLRKDIDSVAARLAGRKFKLDVAAFNALEAERKQIQSSTEDLQNKRNTLSKQIGALKGKGEDTSAVMAEVAGIGDELKASAARLDIVQAKISEFMLSIPNLPHESVPVGTDEAGNVELRKVGTPRSFDFEIRDHVDVGAALGLDFDVAAKITGSRFSVMKGGIARLHRALAQFMLDTHTAEHGYTECYTPYIVNADSLQGTGQLPKFEADLFAVKKGGQEGEGEALYLIPTAEVPLTNIVRDEIVAGDALPIRMTAHSPCFRSEAGSYGRDTRGMIRQHQFDKVEMVQVVHPEKSYEALDEMCGHAENILKKLGLPYRVITLCTGDMGFGATKTYDLEVWLPAQNTYREISSVSNCEAFQARRMQARFRNAQGKPESVHTLNGSGLAVGRTLVAVLENYQQADGSVTIPEVLHPYMGGLQRLTPQA</sequence>
<gene>
    <name evidence="1" type="primary">serS</name>
    <name type="ordered locus">mma_1157</name>
</gene>
<comment type="function">
    <text evidence="1">Catalyzes the attachment of serine to tRNA(Ser). Is also able to aminoacylate tRNA(Sec) with serine, to form the misacylated tRNA L-seryl-tRNA(Sec), which will be further converted into selenocysteinyl-tRNA(Sec).</text>
</comment>
<comment type="catalytic activity">
    <reaction evidence="1">
        <text>tRNA(Ser) + L-serine + ATP = L-seryl-tRNA(Ser) + AMP + diphosphate + H(+)</text>
        <dbReference type="Rhea" id="RHEA:12292"/>
        <dbReference type="Rhea" id="RHEA-COMP:9669"/>
        <dbReference type="Rhea" id="RHEA-COMP:9703"/>
        <dbReference type="ChEBI" id="CHEBI:15378"/>
        <dbReference type="ChEBI" id="CHEBI:30616"/>
        <dbReference type="ChEBI" id="CHEBI:33019"/>
        <dbReference type="ChEBI" id="CHEBI:33384"/>
        <dbReference type="ChEBI" id="CHEBI:78442"/>
        <dbReference type="ChEBI" id="CHEBI:78533"/>
        <dbReference type="ChEBI" id="CHEBI:456215"/>
        <dbReference type="EC" id="6.1.1.11"/>
    </reaction>
</comment>
<comment type="catalytic activity">
    <reaction evidence="1">
        <text>tRNA(Sec) + L-serine + ATP = L-seryl-tRNA(Sec) + AMP + diphosphate + H(+)</text>
        <dbReference type="Rhea" id="RHEA:42580"/>
        <dbReference type="Rhea" id="RHEA-COMP:9742"/>
        <dbReference type="Rhea" id="RHEA-COMP:10128"/>
        <dbReference type="ChEBI" id="CHEBI:15378"/>
        <dbReference type="ChEBI" id="CHEBI:30616"/>
        <dbReference type="ChEBI" id="CHEBI:33019"/>
        <dbReference type="ChEBI" id="CHEBI:33384"/>
        <dbReference type="ChEBI" id="CHEBI:78442"/>
        <dbReference type="ChEBI" id="CHEBI:78533"/>
        <dbReference type="ChEBI" id="CHEBI:456215"/>
        <dbReference type="EC" id="6.1.1.11"/>
    </reaction>
</comment>
<comment type="pathway">
    <text evidence="1">Aminoacyl-tRNA biosynthesis; selenocysteinyl-tRNA(Sec) biosynthesis; L-seryl-tRNA(Sec) from L-serine and tRNA(Sec): step 1/1.</text>
</comment>
<comment type="subunit">
    <text evidence="1">Homodimer. The tRNA molecule binds across the dimer.</text>
</comment>
<comment type="subcellular location">
    <subcellularLocation>
        <location evidence="1">Cytoplasm</location>
    </subcellularLocation>
</comment>
<comment type="domain">
    <text evidence="1">Consists of two distinct domains, a catalytic core and a N-terminal extension that is involved in tRNA binding.</text>
</comment>
<comment type="similarity">
    <text evidence="1">Belongs to the class-II aminoacyl-tRNA synthetase family. Type-1 seryl-tRNA synthetase subfamily.</text>
</comment>
<reference key="1">
    <citation type="journal article" date="2007" name="PLoS Genet.">
        <title>Genome analysis of Minibacterium massiliensis highlights the convergent evolution of water-living bacteria.</title>
        <authorList>
            <person name="Audic S."/>
            <person name="Robert C."/>
            <person name="Campagna B."/>
            <person name="Parinello H."/>
            <person name="Claverie J.-M."/>
            <person name="Raoult D."/>
            <person name="Drancourt M."/>
        </authorList>
    </citation>
    <scope>NUCLEOTIDE SEQUENCE [LARGE SCALE GENOMIC DNA]</scope>
    <source>
        <strain>Marseille</strain>
    </source>
</reference>
<evidence type="ECO:0000255" key="1">
    <source>
        <dbReference type="HAMAP-Rule" id="MF_00176"/>
    </source>
</evidence>
<name>SYS_JANMA</name>
<accession>A6SX50</accession>
<proteinExistence type="inferred from homology"/>
<keyword id="KW-0030">Aminoacyl-tRNA synthetase</keyword>
<keyword id="KW-0067">ATP-binding</keyword>
<keyword id="KW-0963">Cytoplasm</keyword>
<keyword id="KW-0436">Ligase</keyword>
<keyword id="KW-0547">Nucleotide-binding</keyword>
<keyword id="KW-0648">Protein biosynthesis</keyword>
<dbReference type="EC" id="6.1.1.11" evidence="1"/>
<dbReference type="EMBL" id="CP000269">
    <property type="protein sequence ID" value="ABR89147.1"/>
    <property type="molecule type" value="Genomic_DNA"/>
</dbReference>
<dbReference type="RefSeq" id="WP_012079014.1">
    <property type="nucleotide sequence ID" value="NC_009659.1"/>
</dbReference>
<dbReference type="SMR" id="A6SX50"/>
<dbReference type="STRING" id="375286.mma_1157"/>
<dbReference type="KEGG" id="mms:mma_1157"/>
<dbReference type="eggNOG" id="COG0172">
    <property type="taxonomic scope" value="Bacteria"/>
</dbReference>
<dbReference type="HOGENOM" id="CLU_023797_1_1_4"/>
<dbReference type="OrthoDB" id="9804647at2"/>
<dbReference type="UniPathway" id="UPA00906">
    <property type="reaction ID" value="UER00895"/>
</dbReference>
<dbReference type="Proteomes" id="UP000006388">
    <property type="component" value="Chromosome"/>
</dbReference>
<dbReference type="GO" id="GO:0005737">
    <property type="term" value="C:cytoplasm"/>
    <property type="evidence" value="ECO:0007669"/>
    <property type="project" value="UniProtKB-SubCell"/>
</dbReference>
<dbReference type="GO" id="GO:0005524">
    <property type="term" value="F:ATP binding"/>
    <property type="evidence" value="ECO:0007669"/>
    <property type="project" value="UniProtKB-UniRule"/>
</dbReference>
<dbReference type="GO" id="GO:0004828">
    <property type="term" value="F:serine-tRNA ligase activity"/>
    <property type="evidence" value="ECO:0007669"/>
    <property type="project" value="UniProtKB-UniRule"/>
</dbReference>
<dbReference type="GO" id="GO:0016260">
    <property type="term" value="P:selenocysteine biosynthetic process"/>
    <property type="evidence" value="ECO:0007669"/>
    <property type="project" value="UniProtKB-UniRule"/>
</dbReference>
<dbReference type="GO" id="GO:0006434">
    <property type="term" value="P:seryl-tRNA aminoacylation"/>
    <property type="evidence" value="ECO:0007669"/>
    <property type="project" value="UniProtKB-UniRule"/>
</dbReference>
<dbReference type="CDD" id="cd00770">
    <property type="entry name" value="SerRS_core"/>
    <property type="match status" value="1"/>
</dbReference>
<dbReference type="Gene3D" id="3.30.930.10">
    <property type="entry name" value="Bira Bifunctional Protein, Domain 2"/>
    <property type="match status" value="1"/>
</dbReference>
<dbReference type="Gene3D" id="1.10.287.40">
    <property type="entry name" value="Serine-tRNA synthetase, tRNA binding domain"/>
    <property type="match status" value="1"/>
</dbReference>
<dbReference type="HAMAP" id="MF_00176">
    <property type="entry name" value="Ser_tRNA_synth_type1"/>
    <property type="match status" value="1"/>
</dbReference>
<dbReference type="InterPro" id="IPR002314">
    <property type="entry name" value="aa-tRNA-synt_IIb"/>
</dbReference>
<dbReference type="InterPro" id="IPR006195">
    <property type="entry name" value="aa-tRNA-synth_II"/>
</dbReference>
<dbReference type="InterPro" id="IPR045864">
    <property type="entry name" value="aa-tRNA-synth_II/BPL/LPL"/>
</dbReference>
<dbReference type="InterPro" id="IPR002317">
    <property type="entry name" value="Ser-tRNA-ligase_type_1"/>
</dbReference>
<dbReference type="InterPro" id="IPR015866">
    <property type="entry name" value="Ser-tRNA-synth_1_N"/>
</dbReference>
<dbReference type="InterPro" id="IPR042103">
    <property type="entry name" value="SerRS_1_N_sf"/>
</dbReference>
<dbReference type="InterPro" id="IPR033729">
    <property type="entry name" value="SerRS_core"/>
</dbReference>
<dbReference type="InterPro" id="IPR010978">
    <property type="entry name" value="tRNA-bd_arm"/>
</dbReference>
<dbReference type="NCBIfam" id="TIGR00414">
    <property type="entry name" value="serS"/>
    <property type="match status" value="1"/>
</dbReference>
<dbReference type="PANTHER" id="PTHR43697:SF1">
    <property type="entry name" value="SERINE--TRNA LIGASE"/>
    <property type="match status" value="1"/>
</dbReference>
<dbReference type="PANTHER" id="PTHR43697">
    <property type="entry name" value="SERYL-TRNA SYNTHETASE"/>
    <property type="match status" value="1"/>
</dbReference>
<dbReference type="Pfam" id="PF02403">
    <property type="entry name" value="Seryl_tRNA_N"/>
    <property type="match status" value="1"/>
</dbReference>
<dbReference type="Pfam" id="PF00587">
    <property type="entry name" value="tRNA-synt_2b"/>
    <property type="match status" value="1"/>
</dbReference>
<dbReference type="PIRSF" id="PIRSF001529">
    <property type="entry name" value="Ser-tRNA-synth_IIa"/>
    <property type="match status" value="1"/>
</dbReference>
<dbReference type="PRINTS" id="PR00981">
    <property type="entry name" value="TRNASYNTHSER"/>
</dbReference>
<dbReference type="SUPFAM" id="SSF55681">
    <property type="entry name" value="Class II aaRS and biotin synthetases"/>
    <property type="match status" value="1"/>
</dbReference>
<dbReference type="SUPFAM" id="SSF46589">
    <property type="entry name" value="tRNA-binding arm"/>
    <property type="match status" value="1"/>
</dbReference>
<dbReference type="PROSITE" id="PS50862">
    <property type="entry name" value="AA_TRNA_LIGASE_II"/>
    <property type="match status" value="1"/>
</dbReference>
<organism>
    <name type="scientific">Janthinobacterium sp. (strain Marseille)</name>
    <name type="common">Minibacterium massiliensis</name>
    <dbReference type="NCBI Taxonomy" id="375286"/>
    <lineage>
        <taxon>Bacteria</taxon>
        <taxon>Pseudomonadati</taxon>
        <taxon>Pseudomonadota</taxon>
        <taxon>Betaproteobacteria</taxon>
        <taxon>Burkholderiales</taxon>
        <taxon>Oxalobacteraceae</taxon>
        <taxon>Janthinobacterium</taxon>
    </lineage>
</organism>
<feature type="chain" id="PRO_1000019703" description="Serine--tRNA ligase">
    <location>
        <begin position="1"/>
        <end position="431"/>
    </location>
</feature>
<feature type="binding site" evidence="1">
    <location>
        <begin position="236"/>
        <end position="238"/>
    </location>
    <ligand>
        <name>L-serine</name>
        <dbReference type="ChEBI" id="CHEBI:33384"/>
    </ligand>
</feature>
<feature type="binding site" evidence="1">
    <location>
        <begin position="267"/>
        <end position="269"/>
    </location>
    <ligand>
        <name>ATP</name>
        <dbReference type="ChEBI" id="CHEBI:30616"/>
    </ligand>
</feature>
<feature type="binding site" evidence="1">
    <location>
        <position position="290"/>
    </location>
    <ligand>
        <name>L-serine</name>
        <dbReference type="ChEBI" id="CHEBI:33384"/>
    </ligand>
</feature>
<feature type="binding site" evidence="1">
    <location>
        <begin position="354"/>
        <end position="357"/>
    </location>
    <ligand>
        <name>ATP</name>
        <dbReference type="ChEBI" id="CHEBI:30616"/>
    </ligand>
</feature>
<feature type="binding site" evidence="1">
    <location>
        <position position="389"/>
    </location>
    <ligand>
        <name>L-serine</name>
        <dbReference type="ChEBI" id="CHEBI:33384"/>
    </ligand>
</feature>
<protein>
    <recommendedName>
        <fullName evidence="1">Serine--tRNA ligase</fullName>
        <ecNumber evidence="1">6.1.1.11</ecNumber>
    </recommendedName>
    <alternativeName>
        <fullName evidence="1">Seryl-tRNA synthetase</fullName>
        <shortName evidence="1">SerRS</shortName>
    </alternativeName>
    <alternativeName>
        <fullName evidence="1">Seryl-tRNA(Ser/Sec) synthetase</fullName>
    </alternativeName>
</protein>